<comment type="function">
    <text evidence="1">Transport of uracil in the cell.</text>
</comment>
<comment type="catalytic activity">
    <reaction evidence="1">
        <text>uracil(in) + H(+)(in) = uracil(out) + H(+)(out)</text>
        <dbReference type="Rhea" id="RHEA:29239"/>
        <dbReference type="ChEBI" id="CHEBI:15378"/>
        <dbReference type="ChEBI" id="CHEBI:17568"/>
    </reaction>
    <physiologicalReaction direction="right-to-left" evidence="1">
        <dbReference type="Rhea" id="RHEA:29241"/>
    </physiologicalReaction>
</comment>
<comment type="subcellular location">
    <subcellularLocation>
        <location evidence="1">Cell inner membrane</location>
        <topology evidence="1">Multi-pass membrane protein</topology>
    </subcellularLocation>
</comment>
<comment type="similarity">
    <text evidence="2">Belongs to the nucleobase:cation symporter-2 (NCS2) (TC 2.A.40) family.</text>
</comment>
<organism>
    <name type="scientific">Haemophilus influenzae (strain ATCC 51907 / DSM 11121 / KW20 / Rd)</name>
    <dbReference type="NCBI Taxonomy" id="71421"/>
    <lineage>
        <taxon>Bacteria</taxon>
        <taxon>Pseudomonadati</taxon>
        <taxon>Pseudomonadota</taxon>
        <taxon>Gammaproteobacteria</taxon>
        <taxon>Pasteurellales</taxon>
        <taxon>Pasteurellaceae</taxon>
        <taxon>Haemophilus</taxon>
    </lineage>
</organism>
<keyword id="KW-0997">Cell inner membrane</keyword>
<keyword id="KW-1003">Cell membrane</keyword>
<keyword id="KW-0472">Membrane</keyword>
<keyword id="KW-1185">Reference proteome</keyword>
<keyword id="KW-0769">Symport</keyword>
<keyword id="KW-0812">Transmembrane</keyword>
<keyword id="KW-1133">Transmembrane helix</keyword>
<keyword id="KW-0813">Transport</keyword>
<feature type="chain" id="PRO_0000165960" description="Probable uracil permease">
    <location>
        <begin position="1"/>
        <end position="414"/>
    </location>
</feature>
<feature type="topological domain" description="Cytoplasmic" evidence="1">
    <location>
        <begin position="1"/>
        <end position="14"/>
    </location>
</feature>
<feature type="transmembrane region" description="Helical" evidence="1">
    <location>
        <begin position="15"/>
        <end position="38"/>
    </location>
</feature>
<feature type="topological domain" description="Periplasmic" evidence="1">
    <location>
        <begin position="39"/>
        <end position="42"/>
    </location>
</feature>
<feature type="transmembrane region" description="Helical" evidence="1">
    <location>
        <begin position="43"/>
        <end position="62"/>
    </location>
</feature>
<feature type="topological domain" description="Cytoplasmic" evidence="1">
    <location>
        <begin position="63"/>
        <end position="65"/>
    </location>
</feature>
<feature type="transmembrane region" description="Discontinuously helical" evidence="1">
    <location>
        <begin position="66"/>
        <end position="82"/>
    </location>
</feature>
<feature type="topological domain" description="Periplasmic" evidence="1">
    <location>
        <begin position="83"/>
        <end position="91"/>
    </location>
</feature>
<feature type="transmembrane region" description="Helical" evidence="1">
    <location>
        <begin position="92"/>
        <end position="112"/>
    </location>
</feature>
<feature type="topological domain" description="Cytoplasmic" evidence="1">
    <location>
        <begin position="113"/>
        <end position="124"/>
    </location>
</feature>
<feature type="transmembrane region" description="Helical" evidence="1">
    <location>
        <begin position="125"/>
        <end position="146"/>
    </location>
</feature>
<feature type="topological domain" description="Periplasmic" evidence="1">
    <location>
        <begin position="147"/>
        <end position="155"/>
    </location>
</feature>
<feature type="transmembrane region" description="Helical" evidence="1">
    <location>
        <begin position="156"/>
        <end position="171"/>
    </location>
</feature>
<feature type="topological domain" description="Cytoplasmic" evidence="1">
    <location>
        <begin position="172"/>
        <end position="178"/>
    </location>
</feature>
<feature type="transmembrane region" description="Helical" evidence="1">
    <location>
        <begin position="179"/>
        <end position="199"/>
    </location>
</feature>
<feature type="topological domain" description="Periplasmic" evidence="1">
    <location>
        <begin position="200"/>
        <end position="224"/>
    </location>
</feature>
<feature type="transmembrane region" description="Helical" evidence="1">
    <location>
        <begin position="225"/>
        <end position="248"/>
    </location>
</feature>
<feature type="topological domain" description="Cytoplasmic" evidence="1">
    <location>
        <begin position="249"/>
        <end position="261"/>
    </location>
</feature>
<feature type="transmembrane region" description="Helical" evidence="1">
    <location>
        <begin position="262"/>
        <end position="281"/>
    </location>
</feature>
<feature type="transmembrane region" description="Discontinuously helical" evidence="1">
    <location>
        <begin position="282"/>
        <end position="298"/>
    </location>
</feature>
<feature type="topological domain" description="Cytoplasmic" evidence="1">
    <location>
        <begin position="299"/>
        <end position="301"/>
    </location>
</feature>
<feature type="transmembrane region" description="Helical" evidence="1">
    <location>
        <begin position="302"/>
        <end position="319"/>
    </location>
</feature>
<feature type="topological domain" description="Periplasmic" evidence="1">
    <location>
        <begin position="320"/>
        <end position="332"/>
    </location>
</feature>
<feature type="transmembrane region" description="Helical" evidence="1">
    <location>
        <begin position="333"/>
        <end position="354"/>
    </location>
</feature>
<feature type="topological domain" description="Cytoplasmic" evidence="1">
    <location>
        <begin position="355"/>
        <end position="365"/>
    </location>
</feature>
<feature type="intramembrane region" description="Discontinuously helical" evidence="1">
    <location>
        <begin position="366"/>
        <end position="401"/>
    </location>
</feature>
<feature type="topological domain" description="Cytoplasmic" evidence="1">
    <location>
        <begin position="402"/>
        <end position="414"/>
    </location>
</feature>
<feature type="binding site" evidence="1">
    <location>
        <position position="74"/>
    </location>
    <ligand>
        <name>uracil</name>
        <dbReference type="ChEBI" id="CHEBI:17568"/>
    </ligand>
</feature>
<feature type="binding site" evidence="1">
    <location>
        <position position="241"/>
    </location>
    <ligand>
        <name>uracil</name>
        <dbReference type="ChEBI" id="CHEBI:17568"/>
    </ligand>
</feature>
<feature type="binding site" evidence="1">
    <location>
        <position position="290"/>
    </location>
    <ligand>
        <name>uracil</name>
        <dbReference type="ChEBI" id="CHEBI:17568"/>
    </ligand>
</feature>
<gene>
    <name type="primary">uraA</name>
    <name type="ordered locus">HI_1227</name>
</gene>
<dbReference type="EMBL" id="L42023">
    <property type="protein sequence ID" value="AAC22880.1"/>
    <property type="molecule type" value="Genomic_DNA"/>
</dbReference>
<dbReference type="PIR" id="D64111">
    <property type="entry name" value="D64111"/>
</dbReference>
<dbReference type="RefSeq" id="NP_439383.1">
    <property type="nucleotide sequence ID" value="NC_000907.1"/>
</dbReference>
<dbReference type="SMR" id="P45117"/>
<dbReference type="STRING" id="71421.HI_1227"/>
<dbReference type="DNASU" id="950172"/>
<dbReference type="EnsemblBacteria" id="AAC22880">
    <property type="protein sequence ID" value="AAC22880"/>
    <property type="gene ID" value="HI_1227"/>
</dbReference>
<dbReference type="KEGG" id="hin:HI_1227"/>
<dbReference type="PATRIC" id="fig|71421.8.peg.1279"/>
<dbReference type="eggNOG" id="COG2233">
    <property type="taxonomic scope" value="Bacteria"/>
</dbReference>
<dbReference type="HOGENOM" id="CLU_017959_1_2_6"/>
<dbReference type="OrthoDB" id="9779092at2"/>
<dbReference type="PhylomeDB" id="P45117"/>
<dbReference type="BioCyc" id="HINF71421:G1GJ1-1258-MONOMER"/>
<dbReference type="Proteomes" id="UP000000579">
    <property type="component" value="Chromosome"/>
</dbReference>
<dbReference type="GO" id="GO:0005886">
    <property type="term" value="C:plasma membrane"/>
    <property type="evidence" value="ECO:0000318"/>
    <property type="project" value="GO_Central"/>
</dbReference>
<dbReference type="GO" id="GO:0015505">
    <property type="term" value="F:uracil:monoatomic cation symporter activity"/>
    <property type="evidence" value="ECO:0000318"/>
    <property type="project" value="GO_Central"/>
</dbReference>
<dbReference type="GO" id="GO:0098721">
    <property type="term" value="P:uracil import across plasma membrane"/>
    <property type="evidence" value="ECO:0000318"/>
    <property type="project" value="GO_Central"/>
</dbReference>
<dbReference type="InterPro" id="IPR006043">
    <property type="entry name" value="NCS2"/>
</dbReference>
<dbReference type="InterPro" id="IPR006042">
    <property type="entry name" value="Xan_ur_permease"/>
</dbReference>
<dbReference type="NCBIfam" id="TIGR00801">
    <property type="entry name" value="ncs2"/>
    <property type="match status" value="1"/>
</dbReference>
<dbReference type="PANTHER" id="PTHR42810">
    <property type="entry name" value="PURINE PERMEASE C1399.01C-RELATED"/>
    <property type="match status" value="1"/>
</dbReference>
<dbReference type="PANTHER" id="PTHR42810:SF2">
    <property type="entry name" value="PURINE PERMEASE C1399.01C-RELATED"/>
    <property type="match status" value="1"/>
</dbReference>
<dbReference type="Pfam" id="PF00860">
    <property type="entry name" value="Xan_ur_permease"/>
    <property type="match status" value="1"/>
</dbReference>
<dbReference type="PROSITE" id="PS01116">
    <property type="entry name" value="XANTH_URACIL_PERMASE"/>
    <property type="match status" value="1"/>
</dbReference>
<sequence>MTNQIPPSLAENQSKLKQSFVGLQMLFVAFGALVLVPLITGLDSNTALLTAGVGTLLFQFCTGKQVPIFLASSFAFIAPIQYGVQTWGIATTMGGLAFTGLVYFALSTLVKLRGAEALQRFFPPVVVGPVIIIIGMGLAPIAVDMSLGKNSAYAYNDAVLVSMVTLLTTLSVAVFAKGLMKLIPIMFGITAGYILCLFLGLINFQPVIDAPWFSLPKLTTPEFNLEAILYMLPIAIAPAVEHVGGIMAISSVTGKDFLKKPGLHRTLLGDGIATAAASLVGGPPNTTYAEVTGAVMLTRNFNPNIMTWAAVWAIAISFCGKVGAFLSTIPTIVMGGIMMLVFGSIAVVGMSTLIRGKVDVTEARNLCIISVVMTFGIGNMFVDVGNVSLKGISLCAIVAIILNLVLPKAKNEVE</sequence>
<evidence type="ECO:0000250" key="1">
    <source>
        <dbReference type="UniProtKB" id="P0AGM7"/>
    </source>
</evidence>
<evidence type="ECO:0000305" key="2"/>
<protein>
    <recommendedName>
        <fullName evidence="1">Probable uracil permease</fullName>
    </recommendedName>
    <alternativeName>
        <fullName evidence="1">Uracil transporter</fullName>
    </alternativeName>
    <alternativeName>
        <fullName evidence="1">Uracil/H(+) symporter UraA</fullName>
    </alternativeName>
</protein>
<reference key="1">
    <citation type="journal article" date="1995" name="Science">
        <title>Whole-genome random sequencing and assembly of Haemophilus influenzae Rd.</title>
        <authorList>
            <person name="Fleischmann R.D."/>
            <person name="Adams M.D."/>
            <person name="White O."/>
            <person name="Clayton R.A."/>
            <person name="Kirkness E.F."/>
            <person name="Kerlavage A.R."/>
            <person name="Bult C.J."/>
            <person name="Tomb J.-F."/>
            <person name="Dougherty B.A."/>
            <person name="Merrick J.M."/>
            <person name="McKenney K."/>
            <person name="Sutton G.G."/>
            <person name="FitzHugh W."/>
            <person name="Fields C.A."/>
            <person name="Gocayne J.D."/>
            <person name="Scott J.D."/>
            <person name="Shirley R."/>
            <person name="Liu L.-I."/>
            <person name="Glodek A."/>
            <person name="Kelley J.M."/>
            <person name="Weidman J.F."/>
            <person name="Phillips C.A."/>
            <person name="Spriggs T."/>
            <person name="Hedblom E."/>
            <person name="Cotton M.D."/>
            <person name="Utterback T.R."/>
            <person name="Hanna M.C."/>
            <person name="Nguyen D.T."/>
            <person name="Saudek D.M."/>
            <person name="Brandon R.C."/>
            <person name="Fine L.D."/>
            <person name="Fritchman J.L."/>
            <person name="Fuhrmann J.L."/>
            <person name="Geoghagen N.S.M."/>
            <person name="Gnehm C.L."/>
            <person name="McDonald L.A."/>
            <person name="Small K.V."/>
            <person name="Fraser C.M."/>
            <person name="Smith H.O."/>
            <person name="Venter J.C."/>
        </authorList>
    </citation>
    <scope>NUCLEOTIDE SEQUENCE [LARGE SCALE GENOMIC DNA]</scope>
    <source>
        <strain>ATCC 51907 / DSM 11121 / KW20 / Rd</strain>
    </source>
</reference>
<accession>P45117</accession>
<name>URAA_HAEIN</name>
<proteinExistence type="inferred from homology"/>